<keyword id="KW-0067">ATP-binding</keyword>
<keyword id="KW-0418">Kinase</keyword>
<keyword id="KW-0488">Methylation</keyword>
<keyword id="KW-0547">Nucleotide-binding</keyword>
<keyword id="KW-0597">Phosphoprotein</keyword>
<keyword id="KW-1185">Reference proteome</keyword>
<keyword id="KW-0677">Repeat</keyword>
<keyword id="KW-0723">Serine/threonine-protein kinase</keyword>
<keyword id="KW-0728">SH3 domain</keyword>
<keyword id="KW-0808">Transferase</keyword>
<proteinExistence type="evidence at protein level"/>
<dbReference type="EC" id="2.7.11.25"/>
<dbReference type="EMBL" id="AC074312">
    <property type="status" value="NOT_ANNOTATED_CDS"/>
    <property type="molecule type" value="Genomic_DNA"/>
</dbReference>
<dbReference type="EMBL" id="BC046514">
    <property type="protein sequence ID" value="AAH46514.1"/>
    <property type="molecule type" value="mRNA"/>
</dbReference>
<dbReference type="EMBL" id="BC078445">
    <property type="protein sequence ID" value="AAH78445.1"/>
    <property type="molecule type" value="mRNA"/>
</dbReference>
<dbReference type="CCDS" id="CCDS39850.2"/>
<dbReference type="RefSeq" id="NP_001277457.1">
    <property type="nucleotide sequence ID" value="NM_001290528.1"/>
</dbReference>
<dbReference type="SMR" id="Q66L42"/>
<dbReference type="BioGRID" id="234726">
    <property type="interactions" value="9"/>
</dbReference>
<dbReference type="FunCoup" id="Q66L42">
    <property type="interactions" value="1030"/>
</dbReference>
<dbReference type="IntAct" id="Q66L42">
    <property type="interactions" value="1"/>
</dbReference>
<dbReference type="MINT" id="Q66L42"/>
<dbReference type="STRING" id="10090.ENSMUSP00000037725"/>
<dbReference type="GlyGen" id="Q66L42">
    <property type="glycosylation" value="4 sites, 1 O-linked glycan (2 sites)"/>
</dbReference>
<dbReference type="iPTMnet" id="Q66L42"/>
<dbReference type="PhosphoSitePlus" id="Q66L42"/>
<dbReference type="PaxDb" id="10090-ENSMUSP00000103978"/>
<dbReference type="ProteomicsDB" id="287281"/>
<dbReference type="Antibodypedia" id="2053">
    <property type="antibodies" value="268 antibodies from 34 providers"/>
</dbReference>
<dbReference type="DNASU" id="269881"/>
<dbReference type="Ensembl" id="ENSMUST00000036453.14">
    <property type="protein sequence ID" value="ENSMUSP00000037725.8"/>
    <property type="gene ID" value="ENSMUSG00000040390.14"/>
</dbReference>
<dbReference type="GeneID" id="269881"/>
<dbReference type="KEGG" id="mmu:269881"/>
<dbReference type="UCSC" id="uc009fwv.2">
    <property type="organism name" value="mouse"/>
</dbReference>
<dbReference type="AGR" id="MGI:1346879"/>
<dbReference type="CTD" id="4294"/>
<dbReference type="MGI" id="MGI:1346879">
    <property type="gene designation" value="Map3k10"/>
</dbReference>
<dbReference type="VEuPathDB" id="HostDB:ENSMUSG00000040390"/>
<dbReference type="eggNOG" id="KOG0192">
    <property type="taxonomic scope" value="Eukaryota"/>
</dbReference>
<dbReference type="GeneTree" id="ENSGT00940000160518"/>
<dbReference type="HOGENOM" id="CLU_000288_7_14_1"/>
<dbReference type="InParanoid" id="Q66L42"/>
<dbReference type="OMA" id="CNQRKKS"/>
<dbReference type="BioGRID-ORCS" id="269881">
    <property type="hits" value="3 hits in 63 CRISPR screens"/>
</dbReference>
<dbReference type="ChiTaRS" id="Map3k10">
    <property type="organism name" value="mouse"/>
</dbReference>
<dbReference type="PRO" id="PR:Q66L42"/>
<dbReference type="Proteomes" id="UP000000589">
    <property type="component" value="Chromosome 7"/>
</dbReference>
<dbReference type="RNAct" id="Q66L42">
    <property type="molecule type" value="protein"/>
</dbReference>
<dbReference type="Bgee" id="ENSMUSG00000040390">
    <property type="expression patterns" value="Expressed in superior frontal gyrus and 198 other cell types or tissues"/>
</dbReference>
<dbReference type="ExpressionAtlas" id="Q66L42">
    <property type="expression patterns" value="baseline and differential"/>
</dbReference>
<dbReference type="GO" id="GO:0005524">
    <property type="term" value="F:ATP binding"/>
    <property type="evidence" value="ECO:0007669"/>
    <property type="project" value="UniProtKB-KW"/>
</dbReference>
<dbReference type="GO" id="GO:0004709">
    <property type="term" value="F:MAP kinase kinase kinase activity"/>
    <property type="evidence" value="ECO:0007669"/>
    <property type="project" value="UniProtKB-EC"/>
</dbReference>
<dbReference type="GO" id="GO:0004672">
    <property type="term" value="F:protein kinase activity"/>
    <property type="evidence" value="ECO:0000314"/>
    <property type="project" value="MGI"/>
</dbReference>
<dbReference type="GO" id="GO:0106310">
    <property type="term" value="F:protein serine kinase activity"/>
    <property type="evidence" value="ECO:0007669"/>
    <property type="project" value="RHEA"/>
</dbReference>
<dbReference type="GO" id="GO:0003714">
    <property type="term" value="F:transcription corepressor activity"/>
    <property type="evidence" value="ECO:0000314"/>
    <property type="project" value="MGI"/>
</dbReference>
<dbReference type="GO" id="GO:0045892">
    <property type="term" value="P:negative regulation of DNA-templated transcription"/>
    <property type="evidence" value="ECO:0000314"/>
    <property type="project" value="MGI"/>
</dbReference>
<dbReference type="CDD" id="cd12059">
    <property type="entry name" value="SH3_MLK1-3"/>
    <property type="match status" value="1"/>
</dbReference>
<dbReference type="FunFam" id="1.10.510.10:FF:000076">
    <property type="entry name" value="Mitogen-activated protein kinase kinase kinase"/>
    <property type="match status" value="1"/>
</dbReference>
<dbReference type="FunFam" id="2.30.30.40:FF:000079">
    <property type="entry name" value="Mitogen-activated protein kinase kinase kinase"/>
    <property type="match status" value="1"/>
</dbReference>
<dbReference type="FunFam" id="3.30.200.20:FF:000085">
    <property type="entry name" value="Mitogen-activated protein kinase kinase kinase"/>
    <property type="match status" value="1"/>
</dbReference>
<dbReference type="Gene3D" id="3.30.200.20">
    <property type="entry name" value="Phosphorylase Kinase, domain 1"/>
    <property type="match status" value="1"/>
</dbReference>
<dbReference type="Gene3D" id="2.30.30.40">
    <property type="entry name" value="SH3 Domains"/>
    <property type="match status" value="1"/>
</dbReference>
<dbReference type="Gene3D" id="1.10.510.10">
    <property type="entry name" value="Transferase(Phosphotransferase) domain 1"/>
    <property type="match status" value="1"/>
</dbReference>
<dbReference type="InterPro" id="IPR011009">
    <property type="entry name" value="Kinase-like_dom_sf"/>
</dbReference>
<dbReference type="InterPro" id="IPR035779">
    <property type="entry name" value="MLK1-3_SH3"/>
</dbReference>
<dbReference type="InterPro" id="IPR016231">
    <property type="entry name" value="MLK1-4"/>
</dbReference>
<dbReference type="InterPro" id="IPR000719">
    <property type="entry name" value="Prot_kinase_dom"/>
</dbReference>
<dbReference type="InterPro" id="IPR017441">
    <property type="entry name" value="Protein_kinase_ATP_BS"/>
</dbReference>
<dbReference type="InterPro" id="IPR001245">
    <property type="entry name" value="Ser-Thr/Tyr_kinase_cat_dom"/>
</dbReference>
<dbReference type="InterPro" id="IPR008271">
    <property type="entry name" value="Ser/Thr_kinase_AS"/>
</dbReference>
<dbReference type="InterPro" id="IPR051681">
    <property type="entry name" value="Ser/Thr_Kinases-Pseudokinases"/>
</dbReference>
<dbReference type="InterPro" id="IPR036028">
    <property type="entry name" value="SH3-like_dom_sf"/>
</dbReference>
<dbReference type="InterPro" id="IPR001452">
    <property type="entry name" value="SH3_domain"/>
</dbReference>
<dbReference type="PANTHER" id="PTHR44329:SF39">
    <property type="entry name" value="MITOGEN-ACTIVATED PROTEIN KINASE KINASE KINASE 10"/>
    <property type="match status" value="1"/>
</dbReference>
<dbReference type="PANTHER" id="PTHR44329">
    <property type="entry name" value="SERINE/THREONINE-PROTEIN KINASE TNNI3K-RELATED"/>
    <property type="match status" value="1"/>
</dbReference>
<dbReference type="Pfam" id="PF07714">
    <property type="entry name" value="PK_Tyr_Ser-Thr"/>
    <property type="match status" value="1"/>
</dbReference>
<dbReference type="Pfam" id="PF14604">
    <property type="entry name" value="SH3_9"/>
    <property type="match status" value="1"/>
</dbReference>
<dbReference type="PIRSF" id="PIRSF000556">
    <property type="entry name" value="MAPKKK9_11"/>
    <property type="match status" value="1"/>
</dbReference>
<dbReference type="PRINTS" id="PR00452">
    <property type="entry name" value="SH3DOMAIN"/>
</dbReference>
<dbReference type="PRINTS" id="PR00109">
    <property type="entry name" value="TYRKINASE"/>
</dbReference>
<dbReference type="SMART" id="SM00220">
    <property type="entry name" value="S_TKc"/>
    <property type="match status" value="1"/>
</dbReference>
<dbReference type="SMART" id="SM00326">
    <property type="entry name" value="SH3"/>
    <property type="match status" value="1"/>
</dbReference>
<dbReference type="SUPFAM" id="SSF56112">
    <property type="entry name" value="Protein kinase-like (PK-like)"/>
    <property type="match status" value="1"/>
</dbReference>
<dbReference type="SUPFAM" id="SSF50044">
    <property type="entry name" value="SH3-domain"/>
    <property type="match status" value="1"/>
</dbReference>
<dbReference type="PROSITE" id="PS00107">
    <property type="entry name" value="PROTEIN_KINASE_ATP"/>
    <property type="match status" value="1"/>
</dbReference>
<dbReference type="PROSITE" id="PS50011">
    <property type="entry name" value="PROTEIN_KINASE_DOM"/>
    <property type="match status" value="1"/>
</dbReference>
<dbReference type="PROSITE" id="PS00108">
    <property type="entry name" value="PROTEIN_KINASE_ST"/>
    <property type="match status" value="1"/>
</dbReference>
<dbReference type="PROSITE" id="PS50002">
    <property type="entry name" value="SH3"/>
    <property type="match status" value="1"/>
</dbReference>
<organism>
    <name type="scientific">Mus musculus</name>
    <name type="common">Mouse</name>
    <dbReference type="NCBI Taxonomy" id="10090"/>
    <lineage>
        <taxon>Eukaryota</taxon>
        <taxon>Metazoa</taxon>
        <taxon>Chordata</taxon>
        <taxon>Craniata</taxon>
        <taxon>Vertebrata</taxon>
        <taxon>Euteleostomi</taxon>
        <taxon>Mammalia</taxon>
        <taxon>Eutheria</taxon>
        <taxon>Euarchontoglires</taxon>
        <taxon>Glires</taxon>
        <taxon>Rodentia</taxon>
        <taxon>Myomorpha</taxon>
        <taxon>Muroidea</taxon>
        <taxon>Muridae</taxon>
        <taxon>Murinae</taxon>
        <taxon>Mus</taxon>
        <taxon>Mus</taxon>
    </lineage>
</organism>
<protein>
    <recommendedName>
        <fullName>Mitogen-activated protein kinase kinase kinase 10</fullName>
        <ecNumber>2.7.11.25</ecNumber>
    </recommendedName>
</protein>
<reference key="1">
    <citation type="journal article" date="2009" name="PLoS Biol.">
        <title>Lineage-specific biology revealed by a finished genome assembly of the mouse.</title>
        <authorList>
            <person name="Church D.M."/>
            <person name="Goodstadt L."/>
            <person name="Hillier L.W."/>
            <person name="Zody M.C."/>
            <person name="Goldstein S."/>
            <person name="She X."/>
            <person name="Bult C.J."/>
            <person name="Agarwala R."/>
            <person name="Cherry J.L."/>
            <person name="DiCuccio M."/>
            <person name="Hlavina W."/>
            <person name="Kapustin Y."/>
            <person name="Meric P."/>
            <person name="Maglott D."/>
            <person name="Birtle Z."/>
            <person name="Marques A.C."/>
            <person name="Graves T."/>
            <person name="Zhou S."/>
            <person name="Teague B."/>
            <person name="Potamousis K."/>
            <person name="Churas C."/>
            <person name="Place M."/>
            <person name="Herschleb J."/>
            <person name="Runnheim R."/>
            <person name="Forrest D."/>
            <person name="Amos-Landgraf J."/>
            <person name="Schwartz D.C."/>
            <person name="Cheng Z."/>
            <person name="Lindblad-Toh K."/>
            <person name="Eichler E.E."/>
            <person name="Ponting C.P."/>
        </authorList>
    </citation>
    <scope>NUCLEOTIDE SEQUENCE [LARGE SCALE GENOMIC DNA]</scope>
    <source>
        <strain>C57BL/6J</strain>
    </source>
</reference>
<reference key="2">
    <citation type="journal article" date="2004" name="Genome Res.">
        <title>The status, quality, and expansion of the NIH full-length cDNA project: the Mammalian Gene Collection (MGC).</title>
        <authorList>
            <consortium name="The MGC Project Team"/>
        </authorList>
    </citation>
    <scope>NUCLEOTIDE SEQUENCE [LARGE SCALE MRNA] OF 136-940</scope>
    <source>
        <strain>C57BL/6J</strain>
        <strain>FVB/N</strain>
        <tissue>Brain</tissue>
        <tissue>Mammary tumor</tissue>
    </source>
</reference>
<reference key="3">
    <citation type="journal article" date="2010" name="Cell">
        <title>A tissue-specific atlas of mouse protein phosphorylation and expression.</title>
        <authorList>
            <person name="Huttlin E.L."/>
            <person name="Jedrychowski M.P."/>
            <person name="Elias J.E."/>
            <person name="Goswami T."/>
            <person name="Rad R."/>
            <person name="Beausoleil S.A."/>
            <person name="Villen J."/>
            <person name="Haas W."/>
            <person name="Sowa M.E."/>
            <person name="Gygi S.P."/>
        </authorList>
    </citation>
    <scope>PHOSPHORYLATION [LARGE SCALE ANALYSIS] AT SER-498; SER-502; SER-506 AND THR-552</scope>
    <scope>IDENTIFICATION BY MASS SPECTROMETRY [LARGE SCALE ANALYSIS]</scope>
    <source>
        <tissue>Brain</tissue>
    </source>
</reference>
<reference key="4">
    <citation type="journal article" date="2014" name="Mol. Cell. Proteomics">
        <title>Immunoaffinity enrichment and mass spectrometry analysis of protein methylation.</title>
        <authorList>
            <person name="Guo A."/>
            <person name="Gu H."/>
            <person name="Zhou J."/>
            <person name="Mulhern D."/>
            <person name="Wang Y."/>
            <person name="Lee K.A."/>
            <person name="Yang V."/>
            <person name="Aguiar M."/>
            <person name="Kornhauser J."/>
            <person name="Jia X."/>
            <person name="Ren J."/>
            <person name="Beausoleil S.A."/>
            <person name="Silva J.C."/>
            <person name="Vemulapalli V."/>
            <person name="Bedford M.T."/>
            <person name="Comb M.J."/>
        </authorList>
    </citation>
    <scope>METHYLATION [LARGE SCALE ANALYSIS] AT ARG-843</scope>
    <scope>IDENTIFICATION BY MASS SPECTROMETRY [LARGE SCALE ANALYSIS]</scope>
    <source>
        <tissue>Brain</tissue>
    </source>
</reference>
<gene>
    <name type="primary">Map3k10</name>
</gene>
<evidence type="ECO:0000250" key="1"/>
<evidence type="ECO:0000250" key="2">
    <source>
        <dbReference type="UniProtKB" id="D3ZG83"/>
    </source>
</evidence>
<evidence type="ECO:0000255" key="3">
    <source>
        <dbReference type="PROSITE-ProRule" id="PRU00159"/>
    </source>
</evidence>
<evidence type="ECO:0000255" key="4">
    <source>
        <dbReference type="PROSITE-ProRule" id="PRU00192"/>
    </source>
</evidence>
<evidence type="ECO:0000255" key="5">
    <source>
        <dbReference type="PROSITE-ProRule" id="PRU10027"/>
    </source>
</evidence>
<evidence type="ECO:0000256" key="6">
    <source>
        <dbReference type="SAM" id="MobiDB-lite"/>
    </source>
</evidence>
<evidence type="ECO:0000305" key="7"/>
<evidence type="ECO:0007744" key="8">
    <source>
    </source>
</evidence>
<evidence type="ECO:0007744" key="9">
    <source>
    </source>
</evidence>
<comment type="function">
    <text evidence="1">Activates the JUN N-terminal pathway.</text>
</comment>
<comment type="catalytic activity">
    <reaction>
        <text>L-seryl-[protein] + ATP = O-phospho-L-seryl-[protein] + ADP + H(+)</text>
        <dbReference type="Rhea" id="RHEA:17989"/>
        <dbReference type="Rhea" id="RHEA-COMP:9863"/>
        <dbReference type="Rhea" id="RHEA-COMP:11604"/>
        <dbReference type="ChEBI" id="CHEBI:15378"/>
        <dbReference type="ChEBI" id="CHEBI:29999"/>
        <dbReference type="ChEBI" id="CHEBI:30616"/>
        <dbReference type="ChEBI" id="CHEBI:83421"/>
        <dbReference type="ChEBI" id="CHEBI:456216"/>
        <dbReference type="EC" id="2.7.11.25"/>
    </reaction>
</comment>
<comment type="catalytic activity">
    <reaction>
        <text>L-threonyl-[protein] + ATP = O-phospho-L-threonyl-[protein] + ADP + H(+)</text>
        <dbReference type="Rhea" id="RHEA:46608"/>
        <dbReference type="Rhea" id="RHEA-COMP:11060"/>
        <dbReference type="Rhea" id="RHEA-COMP:11605"/>
        <dbReference type="ChEBI" id="CHEBI:15378"/>
        <dbReference type="ChEBI" id="CHEBI:30013"/>
        <dbReference type="ChEBI" id="CHEBI:30616"/>
        <dbReference type="ChEBI" id="CHEBI:61977"/>
        <dbReference type="ChEBI" id="CHEBI:456216"/>
        <dbReference type="EC" id="2.7.11.25"/>
    </reaction>
</comment>
<comment type="cofactor">
    <cofactor evidence="1">
        <name>Mg(2+)</name>
        <dbReference type="ChEBI" id="CHEBI:18420"/>
    </cofactor>
</comment>
<comment type="activity regulation">
    <text evidence="1">Homodimerization via the leucine zipper domains is required for autophosphorylation and subsequent activation.</text>
</comment>
<comment type="subunit">
    <text evidence="1 2">Homodimer. Interacts with SH3RF2.</text>
</comment>
<comment type="PTM">
    <text evidence="1">Autophosphorylation on serine and threonine residues within the activation loop plays a role in enzyme activation.</text>
</comment>
<comment type="similarity">
    <text evidence="7">Belongs to the protein kinase superfamily. STE Ser/Thr protein kinase family. MAP kinase kinase kinase subfamily.</text>
</comment>
<name>M3K10_MOUSE</name>
<feature type="chain" id="PRO_0000277826" description="Mitogen-activated protein kinase kinase kinase 10">
    <location>
        <begin position="1"/>
        <end position="940"/>
    </location>
</feature>
<feature type="domain" description="SH3" evidence="4">
    <location>
        <begin position="16"/>
        <end position="81"/>
    </location>
</feature>
<feature type="domain" description="Protein kinase" evidence="3">
    <location>
        <begin position="98"/>
        <end position="360"/>
    </location>
</feature>
<feature type="region of interest" description="Leucine-zipper 1">
    <location>
        <begin position="384"/>
        <end position="405"/>
    </location>
</feature>
<feature type="region of interest" description="Leucine-zipper 2">
    <location>
        <begin position="419"/>
        <end position="440"/>
    </location>
</feature>
<feature type="region of interest" description="Disordered" evidence="6">
    <location>
        <begin position="490"/>
        <end position="599"/>
    </location>
</feature>
<feature type="region of interest" description="Disordered" evidence="6">
    <location>
        <begin position="687"/>
        <end position="734"/>
    </location>
</feature>
<feature type="region of interest" description="Disordered" evidence="6">
    <location>
        <begin position="749"/>
        <end position="917"/>
    </location>
</feature>
<feature type="compositionally biased region" description="Low complexity" evidence="6">
    <location>
        <begin position="501"/>
        <end position="511"/>
    </location>
</feature>
<feature type="compositionally biased region" description="Basic and acidic residues" evidence="6">
    <location>
        <begin position="560"/>
        <end position="572"/>
    </location>
</feature>
<feature type="compositionally biased region" description="Basic and acidic residues" evidence="6">
    <location>
        <begin position="687"/>
        <end position="698"/>
    </location>
</feature>
<feature type="compositionally biased region" description="Pro residues" evidence="6">
    <location>
        <begin position="765"/>
        <end position="775"/>
    </location>
</feature>
<feature type="compositionally biased region" description="Basic and acidic residues" evidence="6">
    <location>
        <begin position="822"/>
        <end position="840"/>
    </location>
</feature>
<feature type="compositionally biased region" description="Pro residues" evidence="6">
    <location>
        <begin position="899"/>
        <end position="913"/>
    </location>
</feature>
<feature type="active site" description="Proton acceptor" evidence="3 5">
    <location>
        <position position="222"/>
    </location>
</feature>
<feature type="binding site" evidence="3">
    <location>
        <begin position="104"/>
        <end position="112"/>
    </location>
    <ligand>
        <name>ATP</name>
        <dbReference type="ChEBI" id="CHEBI:30616"/>
    </ligand>
</feature>
<feature type="binding site" evidence="3">
    <location>
        <position position="125"/>
    </location>
    <ligand>
        <name>ATP</name>
        <dbReference type="ChEBI" id="CHEBI:30616"/>
    </ligand>
</feature>
<feature type="modified residue" description="Phosphothreonine; by autocatalysis" evidence="1">
    <location>
        <position position="258"/>
    </location>
</feature>
<feature type="modified residue" description="Phosphoserine; by autocatalysis and MAP4K1" evidence="1">
    <location>
        <position position="262"/>
    </location>
</feature>
<feature type="modified residue" description="Phosphoserine" evidence="8">
    <location>
        <position position="498"/>
    </location>
</feature>
<feature type="modified residue" description="Phosphoserine" evidence="8">
    <location>
        <position position="502"/>
    </location>
</feature>
<feature type="modified residue" description="Phosphoserine" evidence="8">
    <location>
        <position position="506"/>
    </location>
</feature>
<feature type="modified residue" description="Phosphothreonine" evidence="8">
    <location>
        <position position="552"/>
    </location>
</feature>
<feature type="modified residue" description="Omega-N-methylarginine" evidence="9">
    <location>
        <position position="843"/>
    </location>
</feature>
<feature type="sequence conflict" description="In Ref. 2; AAH46514." evidence="7" ref="2">
    <original>FGSI</original>
    <variation>PTRP</variation>
    <location>
        <begin position="350"/>
        <end position="353"/>
    </location>
</feature>
<sequence>MEEEEGAAAREWGATPAGPVWTAVFDYEAVGDEELTLRRGDRVQVLSQDCAVSGDEGWWTGQLPSGRVGVFPSNYVAPAAPAAPSDLQLPQEIPFHELQLEEIIGVGGFGKVYRAVWRGEEVAVKAARLDPERDPAVTAEQVRQEARLFGALQHPNIIALRGACLSPPNLCLVMEYARGGALSRVLAGRRVPPHVLVNWAVQVARGMNYLHNDAPVPIIHRDLKSINILILEAIENHNLADTVLKITDFGLAREWHKTTKMSAAGTYAWMAPEVIRLSLFSKSSDVWSFGVLLWELLTGEVPYREIDALAVAYGVAMNKLTLPIPSTCPEPFARLLEECWDPDPHGRPDFGSILKQLEVIEQSALFQMPLESFHSLQEDWKLEIQHMFDDLRTKEKELRSREEELLRAAQEQRFQEEQLRRREQELAEREMDIVERELHLLMSQLSQEKPRVRKRKGNFKRSRLLKLREGSSHISLPSGFEHKITVQASPTLDKRKGSDGASPPASPSIIPRLRAIRLTPMDCGGSSGSGTWSRSGPPKKEELVGGKKKGRTWGPSSTLQKERAGGEERLKALGEGSKQWSSSAPNLGKSPKHTPMAPGFASLNEMEEFAEADEGNNVPPSPYSTPSYLKVPLPAEPSPCVQAPWEPPAVTPSRPGHGARRRCDLALLSCATLLSAVGLGADVAEARAGDGEEQRRWLDSLFFPRPGRFPRGLSPTGRPGGRREDTAPGLGLAPSATLVSLSSVSDCNSTRSLLRSDSDEAAPAAPSPPPSPLAPSPSTNPLVDVELESFKKDPRQSLTPTHVTAAHAVSRGHRRTPSDGALRQREPLELTNHGPRDPLDFPRLPDPQALFPTRRRPLEFPGRPTTLTFAPRPRPAASRPRLDPWKLVSFGRTLSISPPSRPDTPESPGPPSVQPTLLDMDMEGQSQDNTVPLCGVYGSH</sequence>
<accession>Q66L42</accession>
<accession>Q80UW4</accession>